<keyword id="KW-0963">Cytoplasm</keyword>
<keyword id="KW-0274">FAD</keyword>
<keyword id="KW-0285">Flavoprotein</keyword>
<keyword id="KW-0520">NAD</keyword>
<keyword id="KW-0560">Oxidoreductase</keyword>
<keyword id="KW-1185">Reference proteome</keyword>
<protein>
    <recommendedName>
        <fullName evidence="1">Nitric oxide reductase FlRd-NAD(+) reductase</fullName>
        <ecNumber evidence="1">1.18.1.-</ecNumber>
    </recommendedName>
    <alternativeName>
        <fullName evidence="1">Flavorubredoxin reductase</fullName>
        <shortName evidence="1">FlRd-reductase</shortName>
        <shortName evidence="1">FlavoRb reductase</shortName>
    </alternativeName>
</protein>
<accession>B7MKI0</accession>
<name>NORW_ECO45</name>
<evidence type="ECO:0000255" key="1">
    <source>
        <dbReference type="HAMAP-Rule" id="MF_01313"/>
    </source>
</evidence>
<sequence length="377" mass="41333">MSNGIVIIGSGFAARQLVKNIRKQDASIPLTLIAADSMDEYNKPDLSHVISQGQRADDLTRQTAGEFAEQFNLRLFPHTWVTDIDAEAHVVKSQNNQWQYDKLVLATGASAFVPPVPGRELMLTLNSQQEYRACETQLRDARRVLIVGGGLIGSELAMDFCRAGKAVTLIDNAASILASLMPPEVSSRLQHRLTEMGVHLLLKSQLQGLEKTDSGILATLDRQRCIEVDAVIAATGLRPETALARRAGLTINRGVCVDSYLQTSNADIYALGDCAEINGQVLPFLQPIQLSAMVLAKNLLGNNTPLKLPAMLVKIKTPELPLHLAGETQRQDLRWQINTERQGMVARGVDDADQLRAFVVSEDRMKEAFGLLKTLSM</sequence>
<dbReference type="EC" id="1.18.1.-" evidence="1"/>
<dbReference type="EMBL" id="CU928161">
    <property type="protein sequence ID" value="CAR04220.1"/>
    <property type="molecule type" value="Genomic_DNA"/>
</dbReference>
<dbReference type="RefSeq" id="WP_000064713.1">
    <property type="nucleotide sequence ID" value="NC_011742.1"/>
</dbReference>
<dbReference type="SMR" id="B7MKI0"/>
<dbReference type="KEGG" id="ecz:ECS88_2974"/>
<dbReference type="HOGENOM" id="CLU_003291_4_4_6"/>
<dbReference type="UniPathway" id="UPA00638"/>
<dbReference type="Proteomes" id="UP000000747">
    <property type="component" value="Chromosome"/>
</dbReference>
<dbReference type="GO" id="GO:0005737">
    <property type="term" value="C:cytoplasm"/>
    <property type="evidence" value="ECO:0007669"/>
    <property type="project" value="UniProtKB-SubCell"/>
</dbReference>
<dbReference type="GO" id="GO:0016731">
    <property type="term" value="F:oxidoreductase activity, acting on iron-sulfur proteins as donors, NAD or NADP as acceptor"/>
    <property type="evidence" value="ECO:0007669"/>
    <property type="project" value="UniProtKB-UniRule"/>
</dbReference>
<dbReference type="FunFam" id="3.30.390.120:FF:000001">
    <property type="entry name" value="Nitric oxide reductase FlRd-NAD(+) reductase"/>
    <property type="match status" value="1"/>
</dbReference>
<dbReference type="FunFam" id="3.50.50.60:FF:000075">
    <property type="entry name" value="Nitric oxide reductase FlRd-NAD(+) reductase"/>
    <property type="match status" value="1"/>
</dbReference>
<dbReference type="Gene3D" id="3.30.390.120">
    <property type="match status" value="1"/>
</dbReference>
<dbReference type="Gene3D" id="3.50.50.60">
    <property type="entry name" value="FAD/NAD(P)-binding domain"/>
    <property type="match status" value="2"/>
</dbReference>
<dbReference type="HAMAP" id="MF_01313">
    <property type="entry name" value="NorW"/>
    <property type="match status" value="1"/>
</dbReference>
<dbReference type="InterPro" id="IPR050260">
    <property type="entry name" value="FAD-bd_OxRdtase"/>
</dbReference>
<dbReference type="InterPro" id="IPR036188">
    <property type="entry name" value="FAD/NAD-bd_sf"/>
</dbReference>
<dbReference type="InterPro" id="IPR023753">
    <property type="entry name" value="FAD/NAD-binding_dom"/>
</dbReference>
<dbReference type="InterPro" id="IPR023961">
    <property type="entry name" value="NO_rdtase_NorW"/>
</dbReference>
<dbReference type="InterPro" id="IPR041364">
    <property type="entry name" value="Rbx-bd"/>
</dbReference>
<dbReference type="NCBIfam" id="NF003437">
    <property type="entry name" value="PRK04965.1"/>
    <property type="match status" value="1"/>
</dbReference>
<dbReference type="PANTHER" id="PTHR43429:SF3">
    <property type="entry name" value="NITRITE REDUCTASE [NAD(P)H]"/>
    <property type="match status" value="1"/>
</dbReference>
<dbReference type="PANTHER" id="PTHR43429">
    <property type="entry name" value="PYRIDINE NUCLEOTIDE-DISULFIDE OXIDOREDUCTASE DOMAIN-CONTAINING"/>
    <property type="match status" value="1"/>
</dbReference>
<dbReference type="Pfam" id="PF07992">
    <property type="entry name" value="Pyr_redox_2"/>
    <property type="match status" value="1"/>
</dbReference>
<dbReference type="Pfam" id="PF18113">
    <property type="entry name" value="Rbx_binding"/>
    <property type="match status" value="1"/>
</dbReference>
<dbReference type="PRINTS" id="PR00368">
    <property type="entry name" value="FADPNR"/>
</dbReference>
<dbReference type="PRINTS" id="PR00411">
    <property type="entry name" value="PNDRDTASEI"/>
</dbReference>
<dbReference type="SUPFAM" id="SSF51905">
    <property type="entry name" value="FAD/NAD(P)-binding domain"/>
    <property type="match status" value="1"/>
</dbReference>
<reference key="1">
    <citation type="journal article" date="2009" name="PLoS Genet.">
        <title>Organised genome dynamics in the Escherichia coli species results in highly diverse adaptive paths.</title>
        <authorList>
            <person name="Touchon M."/>
            <person name="Hoede C."/>
            <person name="Tenaillon O."/>
            <person name="Barbe V."/>
            <person name="Baeriswyl S."/>
            <person name="Bidet P."/>
            <person name="Bingen E."/>
            <person name="Bonacorsi S."/>
            <person name="Bouchier C."/>
            <person name="Bouvet O."/>
            <person name="Calteau A."/>
            <person name="Chiapello H."/>
            <person name="Clermont O."/>
            <person name="Cruveiller S."/>
            <person name="Danchin A."/>
            <person name="Diard M."/>
            <person name="Dossat C."/>
            <person name="Karoui M.E."/>
            <person name="Frapy E."/>
            <person name="Garry L."/>
            <person name="Ghigo J.M."/>
            <person name="Gilles A.M."/>
            <person name="Johnson J."/>
            <person name="Le Bouguenec C."/>
            <person name="Lescat M."/>
            <person name="Mangenot S."/>
            <person name="Martinez-Jehanne V."/>
            <person name="Matic I."/>
            <person name="Nassif X."/>
            <person name="Oztas S."/>
            <person name="Petit M.A."/>
            <person name="Pichon C."/>
            <person name="Rouy Z."/>
            <person name="Ruf C.S."/>
            <person name="Schneider D."/>
            <person name="Tourret J."/>
            <person name="Vacherie B."/>
            <person name="Vallenet D."/>
            <person name="Medigue C."/>
            <person name="Rocha E.P.C."/>
            <person name="Denamur E."/>
        </authorList>
    </citation>
    <scope>NUCLEOTIDE SEQUENCE [LARGE SCALE GENOMIC DNA]</scope>
    <source>
        <strain>S88 / ExPEC</strain>
    </source>
</reference>
<proteinExistence type="inferred from homology"/>
<organism>
    <name type="scientific">Escherichia coli O45:K1 (strain S88 / ExPEC)</name>
    <dbReference type="NCBI Taxonomy" id="585035"/>
    <lineage>
        <taxon>Bacteria</taxon>
        <taxon>Pseudomonadati</taxon>
        <taxon>Pseudomonadota</taxon>
        <taxon>Gammaproteobacteria</taxon>
        <taxon>Enterobacterales</taxon>
        <taxon>Enterobacteriaceae</taxon>
        <taxon>Escherichia</taxon>
    </lineage>
</organism>
<gene>
    <name evidence="1" type="primary">norW</name>
    <name evidence="1" type="synonym">flrR</name>
    <name type="ordered locus">ECS88_2974</name>
</gene>
<comment type="function">
    <text evidence="1">One of at least two accessory proteins for anaerobic nitric oxide (NO) reductase. Reduces the rubredoxin moiety of NO reductase.</text>
</comment>
<comment type="catalytic activity">
    <reaction evidence="1">
        <text>2 reduced [nitric oxide reductase rubredoxin domain] + NAD(+) + H(+) = 2 oxidized [nitric oxide reductase rubredoxin domain] + NADH</text>
        <dbReference type="Rhea" id="RHEA:42960"/>
        <dbReference type="Rhea" id="RHEA-COMP:10304"/>
        <dbReference type="Rhea" id="RHEA-COMP:10305"/>
        <dbReference type="ChEBI" id="CHEBI:15378"/>
        <dbReference type="ChEBI" id="CHEBI:29033"/>
        <dbReference type="ChEBI" id="CHEBI:29034"/>
        <dbReference type="ChEBI" id="CHEBI:57540"/>
        <dbReference type="ChEBI" id="CHEBI:57945"/>
    </reaction>
</comment>
<comment type="cofactor">
    <cofactor evidence="1">
        <name>FAD</name>
        <dbReference type="ChEBI" id="CHEBI:57692"/>
    </cofactor>
</comment>
<comment type="pathway">
    <text evidence="1">Nitrogen metabolism; nitric oxide reduction.</text>
</comment>
<comment type="subcellular location">
    <subcellularLocation>
        <location evidence="1">Cytoplasm</location>
    </subcellularLocation>
</comment>
<comment type="similarity">
    <text evidence="1">Belongs to the FAD-dependent oxidoreductase family.</text>
</comment>
<feature type="chain" id="PRO_1000141167" description="Nitric oxide reductase FlRd-NAD(+) reductase">
    <location>
        <begin position="1"/>
        <end position="377"/>
    </location>
</feature>